<feature type="chain" id="PRO_0000119469" description="GTP cyclohydrolase 1">
    <location>
        <begin position="1"/>
        <end position="203"/>
    </location>
</feature>
<feature type="binding site" evidence="2">
    <location>
        <position position="87"/>
    </location>
    <ligand>
        <name>Zn(2+)</name>
        <dbReference type="ChEBI" id="CHEBI:29105"/>
    </ligand>
</feature>
<feature type="binding site" evidence="2">
    <location>
        <position position="90"/>
    </location>
    <ligand>
        <name>Zn(2+)</name>
        <dbReference type="ChEBI" id="CHEBI:29105"/>
    </ligand>
</feature>
<feature type="binding site" evidence="2">
    <location>
        <position position="158"/>
    </location>
    <ligand>
        <name>Zn(2+)</name>
        <dbReference type="ChEBI" id="CHEBI:29105"/>
    </ligand>
</feature>
<protein>
    <recommendedName>
        <fullName evidence="2">GTP cyclohydrolase 1</fullName>
        <ecNumber evidence="2">3.5.4.16</ecNumber>
    </recommendedName>
    <alternativeName>
        <fullName evidence="2">GTP cyclohydrolase I</fullName>
        <shortName evidence="2">GTP-CH-I</shortName>
    </alternativeName>
</protein>
<accession>Q87D63</accession>
<keyword id="KW-0342">GTP-binding</keyword>
<keyword id="KW-0378">Hydrolase</keyword>
<keyword id="KW-0479">Metal-binding</keyword>
<keyword id="KW-0547">Nucleotide-binding</keyword>
<keyword id="KW-0554">One-carbon metabolism</keyword>
<keyword id="KW-1185">Reference proteome</keyword>
<keyword id="KW-0862">Zinc</keyword>
<evidence type="ECO:0000250" key="1"/>
<evidence type="ECO:0000255" key="2">
    <source>
        <dbReference type="HAMAP-Rule" id="MF_00223"/>
    </source>
</evidence>
<evidence type="ECO:0000305" key="3"/>
<sequence>MDHSKQQNASITQAQAEEAVRTLLRWAGEDPTREGLLDTPRRVVEAYGDWFSGYREDPHDYLQRTFEEISCYDEMIVLRNITYESHCEHHMAPIIGKVHVGYLPNGKVVGISKLARVVESYARRFQIQEKMTAQIAACIQDTLTPRGVGVVIEGAHACMTTRGIHKRGVSMVTSKMLGTFREDARTRAEFLQFIEVGTNVIDL</sequence>
<comment type="catalytic activity">
    <reaction evidence="2">
        <text>GTP + H2O = 7,8-dihydroneopterin 3'-triphosphate + formate + H(+)</text>
        <dbReference type="Rhea" id="RHEA:17473"/>
        <dbReference type="ChEBI" id="CHEBI:15377"/>
        <dbReference type="ChEBI" id="CHEBI:15378"/>
        <dbReference type="ChEBI" id="CHEBI:15740"/>
        <dbReference type="ChEBI" id="CHEBI:37565"/>
        <dbReference type="ChEBI" id="CHEBI:58462"/>
        <dbReference type="EC" id="3.5.4.16"/>
    </reaction>
</comment>
<comment type="pathway">
    <text evidence="2">Cofactor biosynthesis; 7,8-dihydroneopterin triphosphate biosynthesis; 7,8-dihydroneopterin triphosphate from GTP: step 1/1.</text>
</comment>
<comment type="subunit">
    <text evidence="1">Toroid-shaped homodecamer, composed of two pentamers of five dimers.</text>
</comment>
<comment type="similarity">
    <text evidence="2">Belongs to the GTP cyclohydrolase I family.</text>
</comment>
<comment type="sequence caution" evidence="3">
    <conflict type="erroneous initiation">
        <sequence resource="EMBL-CDS" id="AAO28691"/>
    </conflict>
</comment>
<reference key="1">
    <citation type="journal article" date="2003" name="J. Bacteriol.">
        <title>Comparative analyses of the complete genome sequences of Pierce's disease and citrus variegated chlorosis strains of Xylella fastidiosa.</title>
        <authorList>
            <person name="Van Sluys M.A."/>
            <person name="de Oliveira M.C."/>
            <person name="Monteiro-Vitorello C.B."/>
            <person name="Miyaki C.Y."/>
            <person name="Furlan L.R."/>
            <person name="Camargo L.E.A."/>
            <person name="da Silva A.C.R."/>
            <person name="Moon D.H."/>
            <person name="Takita M.A."/>
            <person name="Lemos E.G.M."/>
            <person name="Machado M.A."/>
            <person name="Ferro M.I.T."/>
            <person name="da Silva F.R."/>
            <person name="Goldman M.H.S."/>
            <person name="Goldman G.H."/>
            <person name="Lemos M.V.F."/>
            <person name="El-Dorry H."/>
            <person name="Tsai S.M."/>
            <person name="Carrer H."/>
            <person name="Carraro D.M."/>
            <person name="de Oliveira R.C."/>
            <person name="Nunes L.R."/>
            <person name="Siqueira W.J."/>
            <person name="Coutinho L.L."/>
            <person name="Kimura E.T."/>
            <person name="Ferro E.S."/>
            <person name="Harakava R."/>
            <person name="Kuramae E.E."/>
            <person name="Marino C.L."/>
            <person name="Giglioti E."/>
            <person name="Abreu I.L."/>
            <person name="Alves L.M.C."/>
            <person name="do Amaral A.M."/>
            <person name="Baia G.S."/>
            <person name="Blanco S.R."/>
            <person name="Brito M.S."/>
            <person name="Cannavan F.S."/>
            <person name="Celestino A.V."/>
            <person name="da Cunha A.F."/>
            <person name="Fenille R.C."/>
            <person name="Ferro J.A."/>
            <person name="Formighieri E.F."/>
            <person name="Kishi L.T."/>
            <person name="Leoni S.G."/>
            <person name="Oliveira A.R."/>
            <person name="Rosa V.E. Jr."/>
            <person name="Sassaki F.T."/>
            <person name="Sena J.A.D."/>
            <person name="de Souza A.A."/>
            <person name="Truffi D."/>
            <person name="Tsukumo F."/>
            <person name="Yanai G.M."/>
            <person name="Zaros L.G."/>
            <person name="Civerolo E.L."/>
            <person name="Simpson A.J.G."/>
            <person name="Almeida N.F. Jr."/>
            <person name="Setubal J.C."/>
            <person name="Kitajima J.P."/>
        </authorList>
    </citation>
    <scope>NUCLEOTIDE SEQUENCE [LARGE SCALE GENOMIC DNA]</scope>
    <source>
        <strain>Temecula1 / ATCC 700964</strain>
    </source>
</reference>
<proteinExistence type="inferred from homology"/>
<name>GCH1_XYLFT</name>
<organism>
    <name type="scientific">Xylella fastidiosa (strain Temecula1 / ATCC 700964)</name>
    <dbReference type="NCBI Taxonomy" id="183190"/>
    <lineage>
        <taxon>Bacteria</taxon>
        <taxon>Pseudomonadati</taxon>
        <taxon>Pseudomonadota</taxon>
        <taxon>Gammaproteobacteria</taxon>
        <taxon>Lysobacterales</taxon>
        <taxon>Lysobacteraceae</taxon>
        <taxon>Xylella</taxon>
    </lineage>
</organism>
<dbReference type="EC" id="3.5.4.16" evidence="2"/>
<dbReference type="EMBL" id="AE009442">
    <property type="protein sequence ID" value="AAO28691.1"/>
    <property type="status" value="ALT_INIT"/>
    <property type="molecule type" value="Genomic_DNA"/>
</dbReference>
<dbReference type="RefSeq" id="WP_004091133.1">
    <property type="nucleotide sequence ID" value="NC_004556.1"/>
</dbReference>
<dbReference type="SMR" id="Q87D63"/>
<dbReference type="GeneID" id="93904610"/>
<dbReference type="KEGG" id="xft:PD_0823"/>
<dbReference type="HOGENOM" id="CLU_049768_3_1_6"/>
<dbReference type="UniPathway" id="UPA00848">
    <property type="reaction ID" value="UER00151"/>
</dbReference>
<dbReference type="Proteomes" id="UP000002516">
    <property type="component" value="Chromosome"/>
</dbReference>
<dbReference type="GO" id="GO:0005737">
    <property type="term" value="C:cytoplasm"/>
    <property type="evidence" value="ECO:0007669"/>
    <property type="project" value="TreeGrafter"/>
</dbReference>
<dbReference type="GO" id="GO:0005525">
    <property type="term" value="F:GTP binding"/>
    <property type="evidence" value="ECO:0007669"/>
    <property type="project" value="UniProtKB-KW"/>
</dbReference>
<dbReference type="GO" id="GO:0003934">
    <property type="term" value="F:GTP cyclohydrolase I activity"/>
    <property type="evidence" value="ECO:0007669"/>
    <property type="project" value="UniProtKB-UniRule"/>
</dbReference>
<dbReference type="GO" id="GO:0008270">
    <property type="term" value="F:zinc ion binding"/>
    <property type="evidence" value="ECO:0007669"/>
    <property type="project" value="UniProtKB-UniRule"/>
</dbReference>
<dbReference type="GO" id="GO:0006730">
    <property type="term" value="P:one-carbon metabolic process"/>
    <property type="evidence" value="ECO:0007669"/>
    <property type="project" value="UniProtKB-UniRule"/>
</dbReference>
<dbReference type="GO" id="GO:0006729">
    <property type="term" value="P:tetrahydrobiopterin biosynthetic process"/>
    <property type="evidence" value="ECO:0007669"/>
    <property type="project" value="TreeGrafter"/>
</dbReference>
<dbReference type="GO" id="GO:0046654">
    <property type="term" value="P:tetrahydrofolate biosynthetic process"/>
    <property type="evidence" value="ECO:0007669"/>
    <property type="project" value="UniProtKB-UniRule"/>
</dbReference>
<dbReference type="FunFam" id="1.10.286.10:FF:000001">
    <property type="entry name" value="GTP cyclohydrolase 1"/>
    <property type="match status" value="1"/>
</dbReference>
<dbReference type="FunFam" id="3.30.1130.10:FF:000001">
    <property type="entry name" value="GTP cyclohydrolase 1"/>
    <property type="match status" value="1"/>
</dbReference>
<dbReference type="Gene3D" id="1.10.286.10">
    <property type="match status" value="1"/>
</dbReference>
<dbReference type="Gene3D" id="3.30.1130.10">
    <property type="match status" value="1"/>
</dbReference>
<dbReference type="HAMAP" id="MF_00223">
    <property type="entry name" value="FolE"/>
    <property type="match status" value="1"/>
</dbReference>
<dbReference type="InterPro" id="IPR043133">
    <property type="entry name" value="GTP-CH-I_C/QueF"/>
</dbReference>
<dbReference type="InterPro" id="IPR043134">
    <property type="entry name" value="GTP-CH-I_N"/>
</dbReference>
<dbReference type="InterPro" id="IPR001474">
    <property type="entry name" value="GTP_CycHdrlase_I"/>
</dbReference>
<dbReference type="InterPro" id="IPR018234">
    <property type="entry name" value="GTP_CycHdrlase_I_CS"/>
</dbReference>
<dbReference type="InterPro" id="IPR020602">
    <property type="entry name" value="GTP_CycHdrlase_I_dom"/>
</dbReference>
<dbReference type="NCBIfam" id="TIGR00063">
    <property type="entry name" value="folE"/>
    <property type="match status" value="1"/>
</dbReference>
<dbReference type="NCBIfam" id="NF006825">
    <property type="entry name" value="PRK09347.1-2"/>
    <property type="match status" value="1"/>
</dbReference>
<dbReference type="NCBIfam" id="NF006826">
    <property type="entry name" value="PRK09347.1-3"/>
    <property type="match status" value="1"/>
</dbReference>
<dbReference type="PANTHER" id="PTHR11109:SF7">
    <property type="entry name" value="GTP CYCLOHYDROLASE 1"/>
    <property type="match status" value="1"/>
</dbReference>
<dbReference type="PANTHER" id="PTHR11109">
    <property type="entry name" value="GTP CYCLOHYDROLASE I"/>
    <property type="match status" value="1"/>
</dbReference>
<dbReference type="Pfam" id="PF01227">
    <property type="entry name" value="GTP_cyclohydroI"/>
    <property type="match status" value="1"/>
</dbReference>
<dbReference type="SUPFAM" id="SSF55620">
    <property type="entry name" value="Tetrahydrobiopterin biosynthesis enzymes-like"/>
    <property type="match status" value="1"/>
</dbReference>
<dbReference type="PROSITE" id="PS00859">
    <property type="entry name" value="GTP_CYCLOHYDROL_1_1"/>
    <property type="match status" value="1"/>
</dbReference>
<dbReference type="PROSITE" id="PS00860">
    <property type="entry name" value="GTP_CYCLOHYDROL_1_2"/>
    <property type="match status" value="1"/>
</dbReference>
<gene>
    <name evidence="2" type="primary">folE</name>
    <name type="ordered locus">PD_0823</name>
</gene>